<name>GCSH_BACHK</name>
<comment type="function">
    <text evidence="1">The glycine cleavage system catalyzes the degradation of glycine. The H protein shuttles the methylamine group of glycine from the P protein to the T protein.</text>
</comment>
<comment type="function">
    <text evidence="1">Is also involved in protein lipoylation via its role as an octanoyl/lipoyl carrier protein intermediate.</text>
</comment>
<comment type="cofactor">
    <cofactor evidence="1">
        <name>(R)-lipoate</name>
        <dbReference type="ChEBI" id="CHEBI:83088"/>
    </cofactor>
    <text evidence="1">Binds 1 lipoyl cofactor covalently.</text>
</comment>
<comment type="subunit">
    <text evidence="1">The glycine cleavage system is composed of four proteins: P, T, L and H.</text>
</comment>
<comment type="similarity">
    <text evidence="1">Belongs to the GcvH family.</text>
</comment>
<feature type="chain" id="PRO_0000302350" description="Glycine cleavage system H protein">
    <location>
        <begin position="1"/>
        <end position="127"/>
    </location>
</feature>
<feature type="domain" description="Lipoyl-binding" evidence="2">
    <location>
        <begin position="22"/>
        <end position="104"/>
    </location>
</feature>
<feature type="modified residue" description="N6-lipoyllysine" evidence="1">
    <location>
        <position position="63"/>
    </location>
</feature>
<organism>
    <name type="scientific">Bacillus thuringiensis subsp. konkukian (strain 97-27)</name>
    <dbReference type="NCBI Taxonomy" id="281309"/>
    <lineage>
        <taxon>Bacteria</taxon>
        <taxon>Bacillati</taxon>
        <taxon>Bacillota</taxon>
        <taxon>Bacilli</taxon>
        <taxon>Bacillales</taxon>
        <taxon>Bacillaceae</taxon>
        <taxon>Bacillus</taxon>
        <taxon>Bacillus cereus group</taxon>
    </lineage>
</organism>
<sequence>MSIPNNLRYSEEHEWVKTEGNEVVIGITHFAQNELGDIVFVELPEVGATIEADEPFGSVESVKTVSELYAPVSGKVVAVNEELSDQPELVNESPYEGAWMVKVELSDASQVEKLLTAEKYAEMTNQD</sequence>
<keyword id="KW-0450">Lipoyl</keyword>
<protein>
    <recommendedName>
        <fullName evidence="1">Glycine cleavage system H protein</fullName>
    </recommendedName>
    <alternativeName>
        <fullName evidence="1">Octanoyl/lipoyl carrier protein</fullName>
    </alternativeName>
</protein>
<evidence type="ECO:0000255" key="1">
    <source>
        <dbReference type="HAMAP-Rule" id="MF_00272"/>
    </source>
</evidence>
<evidence type="ECO:0000255" key="2">
    <source>
        <dbReference type="PROSITE-ProRule" id="PRU01066"/>
    </source>
</evidence>
<accession>Q6HBR6</accession>
<reference key="1">
    <citation type="journal article" date="2006" name="J. Bacteriol.">
        <title>Pathogenomic sequence analysis of Bacillus cereus and Bacillus thuringiensis isolates closely related to Bacillus anthracis.</title>
        <authorList>
            <person name="Han C.S."/>
            <person name="Xie G."/>
            <person name="Challacombe J.F."/>
            <person name="Altherr M.R."/>
            <person name="Bhotika S.S."/>
            <person name="Bruce D."/>
            <person name="Campbell C.S."/>
            <person name="Campbell M.L."/>
            <person name="Chen J."/>
            <person name="Chertkov O."/>
            <person name="Cleland C."/>
            <person name="Dimitrijevic M."/>
            <person name="Doggett N.A."/>
            <person name="Fawcett J.J."/>
            <person name="Glavina T."/>
            <person name="Goodwin L.A."/>
            <person name="Hill K.K."/>
            <person name="Hitchcock P."/>
            <person name="Jackson P.J."/>
            <person name="Keim P."/>
            <person name="Kewalramani A.R."/>
            <person name="Longmire J."/>
            <person name="Lucas S."/>
            <person name="Malfatti S."/>
            <person name="McMurry K."/>
            <person name="Meincke L.J."/>
            <person name="Misra M."/>
            <person name="Moseman B.L."/>
            <person name="Mundt M."/>
            <person name="Munk A.C."/>
            <person name="Okinaka R.T."/>
            <person name="Parson-Quintana B."/>
            <person name="Reilly L.P."/>
            <person name="Richardson P."/>
            <person name="Robinson D.L."/>
            <person name="Rubin E."/>
            <person name="Saunders E."/>
            <person name="Tapia R."/>
            <person name="Tesmer J.G."/>
            <person name="Thayer N."/>
            <person name="Thompson L.S."/>
            <person name="Tice H."/>
            <person name="Ticknor L.O."/>
            <person name="Wills P.L."/>
            <person name="Brettin T.S."/>
            <person name="Gilna P."/>
        </authorList>
    </citation>
    <scope>NUCLEOTIDE SEQUENCE [LARGE SCALE GENOMIC DNA]</scope>
    <source>
        <strain>97-27</strain>
    </source>
</reference>
<proteinExistence type="inferred from homology"/>
<gene>
    <name evidence="1" type="primary">gcvH</name>
    <name type="ordered locus">BT9727_4700</name>
</gene>
<dbReference type="EMBL" id="AE017355">
    <property type="protein sequence ID" value="AAT62561.1"/>
    <property type="molecule type" value="Genomic_DNA"/>
</dbReference>
<dbReference type="RefSeq" id="WP_000026899.1">
    <property type="nucleotide sequence ID" value="NC_005957.1"/>
</dbReference>
<dbReference type="RefSeq" id="YP_039010.1">
    <property type="nucleotide sequence ID" value="NC_005957.1"/>
</dbReference>
<dbReference type="SMR" id="Q6HBR6"/>
<dbReference type="GeneID" id="45024848"/>
<dbReference type="KEGG" id="btk:BT9727_4700"/>
<dbReference type="PATRIC" id="fig|281309.8.peg.4999"/>
<dbReference type="HOGENOM" id="CLU_097408_2_2_9"/>
<dbReference type="Proteomes" id="UP000001301">
    <property type="component" value="Chromosome"/>
</dbReference>
<dbReference type="GO" id="GO:0005829">
    <property type="term" value="C:cytosol"/>
    <property type="evidence" value="ECO:0007669"/>
    <property type="project" value="TreeGrafter"/>
</dbReference>
<dbReference type="GO" id="GO:0005960">
    <property type="term" value="C:glycine cleavage complex"/>
    <property type="evidence" value="ECO:0007669"/>
    <property type="project" value="InterPro"/>
</dbReference>
<dbReference type="GO" id="GO:0019464">
    <property type="term" value="P:glycine decarboxylation via glycine cleavage system"/>
    <property type="evidence" value="ECO:0007669"/>
    <property type="project" value="UniProtKB-UniRule"/>
</dbReference>
<dbReference type="CDD" id="cd06848">
    <property type="entry name" value="GCS_H"/>
    <property type="match status" value="1"/>
</dbReference>
<dbReference type="Gene3D" id="2.40.50.100">
    <property type="match status" value="1"/>
</dbReference>
<dbReference type="HAMAP" id="MF_00272">
    <property type="entry name" value="GcvH"/>
    <property type="match status" value="1"/>
</dbReference>
<dbReference type="InterPro" id="IPR003016">
    <property type="entry name" value="2-oxoA_DH_lipoyl-BS"/>
</dbReference>
<dbReference type="InterPro" id="IPR000089">
    <property type="entry name" value="Biotin_lipoyl"/>
</dbReference>
<dbReference type="InterPro" id="IPR002930">
    <property type="entry name" value="GCV_H"/>
</dbReference>
<dbReference type="InterPro" id="IPR033753">
    <property type="entry name" value="GCV_H/Fam206"/>
</dbReference>
<dbReference type="InterPro" id="IPR017453">
    <property type="entry name" value="GCV_H_sub"/>
</dbReference>
<dbReference type="InterPro" id="IPR011053">
    <property type="entry name" value="Single_hybrid_motif"/>
</dbReference>
<dbReference type="NCBIfam" id="TIGR00527">
    <property type="entry name" value="gcvH"/>
    <property type="match status" value="1"/>
</dbReference>
<dbReference type="NCBIfam" id="NF002270">
    <property type="entry name" value="PRK01202.1"/>
    <property type="match status" value="1"/>
</dbReference>
<dbReference type="PANTHER" id="PTHR11715">
    <property type="entry name" value="GLYCINE CLEAVAGE SYSTEM H PROTEIN"/>
    <property type="match status" value="1"/>
</dbReference>
<dbReference type="PANTHER" id="PTHR11715:SF3">
    <property type="entry name" value="GLYCINE CLEAVAGE SYSTEM H PROTEIN-RELATED"/>
    <property type="match status" value="1"/>
</dbReference>
<dbReference type="Pfam" id="PF01597">
    <property type="entry name" value="GCV_H"/>
    <property type="match status" value="1"/>
</dbReference>
<dbReference type="SUPFAM" id="SSF51230">
    <property type="entry name" value="Single hybrid motif"/>
    <property type="match status" value="1"/>
</dbReference>
<dbReference type="PROSITE" id="PS50968">
    <property type="entry name" value="BIOTINYL_LIPOYL"/>
    <property type="match status" value="1"/>
</dbReference>
<dbReference type="PROSITE" id="PS00189">
    <property type="entry name" value="LIPOYL"/>
    <property type="match status" value="1"/>
</dbReference>